<protein>
    <recommendedName>
        <fullName evidence="1">Large ribosomal subunit protein eL20</fullName>
    </recommendedName>
    <alternativeName>
        <fullName evidence="2">50S ribosomal protein L18Ae</fullName>
    </alternativeName>
    <alternativeName>
        <fullName evidence="1">50S ribosomal protein L20e</fullName>
    </alternativeName>
    <alternativeName>
        <fullName evidence="1">50S ribosomal protein LX</fullName>
    </alternativeName>
    <alternativeName>
        <fullName>LXA</fullName>
    </alternativeName>
</protein>
<keyword id="KW-0687">Ribonucleoprotein</keyword>
<keyword id="KW-0689">Ribosomal protein</keyword>
<keyword id="KW-0694">RNA-binding</keyword>
<keyword id="KW-0699">rRNA-binding</keyword>
<organism>
    <name type="scientific">Pyrococcus abyssi (strain GE5 / Orsay)</name>
    <dbReference type="NCBI Taxonomy" id="272844"/>
    <lineage>
        <taxon>Archaea</taxon>
        <taxon>Methanobacteriati</taxon>
        <taxon>Methanobacteriota</taxon>
        <taxon>Thermococci</taxon>
        <taxon>Thermococcales</taxon>
        <taxon>Thermococcaceae</taxon>
        <taxon>Pyrococcus</taxon>
    </lineage>
</organism>
<evidence type="ECO:0000255" key="1">
    <source>
        <dbReference type="HAMAP-Rule" id="MF_00273"/>
    </source>
</evidence>
<evidence type="ECO:0000305" key="2"/>
<name>RL18A_PYRAB</name>
<accession>Q9UYI5</accession>
<accession>G8ZIU3</accession>
<dbReference type="EMBL" id="AJ248287">
    <property type="protein sequence ID" value="CAB50427.1"/>
    <property type="molecule type" value="Genomic_DNA"/>
</dbReference>
<dbReference type="EMBL" id="HE613800">
    <property type="protein sequence ID" value="CCE70976.1"/>
    <property type="molecule type" value="Genomic_DNA"/>
</dbReference>
<dbReference type="PIR" id="F75066">
    <property type="entry name" value="F75066"/>
</dbReference>
<dbReference type="RefSeq" id="WP_010868640.1">
    <property type="nucleotide sequence ID" value="NC_000868.1"/>
</dbReference>
<dbReference type="SMR" id="Q9UYI5"/>
<dbReference type="STRING" id="272844.PAB7388"/>
<dbReference type="KEGG" id="pab:PAB7388"/>
<dbReference type="PATRIC" id="fig|272844.11.peg.1621"/>
<dbReference type="eggNOG" id="arCOG04175">
    <property type="taxonomic scope" value="Archaea"/>
</dbReference>
<dbReference type="HOGENOM" id="CLU_177460_0_1_2"/>
<dbReference type="OrthoDB" id="191241at2157"/>
<dbReference type="PhylomeDB" id="Q9UYI5"/>
<dbReference type="Proteomes" id="UP000000810">
    <property type="component" value="Chromosome"/>
</dbReference>
<dbReference type="Proteomes" id="UP000009139">
    <property type="component" value="Chromosome"/>
</dbReference>
<dbReference type="GO" id="GO:1990904">
    <property type="term" value="C:ribonucleoprotein complex"/>
    <property type="evidence" value="ECO:0007669"/>
    <property type="project" value="UniProtKB-KW"/>
</dbReference>
<dbReference type="GO" id="GO:0005840">
    <property type="term" value="C:ribosome"/>
    <property type="evidence" value="ECO:0007669"/>
    <property type="project" value="UniProtKB-KW"/>
</dbReference>
<dbReference type="GO" id="GO:0070180">
    <property type="term" value="F:large ribosomal subunit rRNA binding"/>
    <property type="evidence" value="ECO:0007669"/>
    <property type="project" value="UniProtKB-UniRule"/>
</dbReference>
<dbReference type="GO" id="GO:0003735">
    <property type="term" value="F:structural constituent of ribosome"/>
    <property type="evidence" value="ECO:0007669"/>
    <property type="project" value="InterPro"/>
</dbReference>
<dbReference type="GO" id="GO:0006412">
    <property type="term" value="P:translation"/>
    <property type="evidence" value="ECO:0007669"/>
    <property type="project" value="UniProtKB-UniRule"/>
</dbReference>
<dbReference type="Gene3D" id="3.10.20.10">
    <property type="match status" value="1"/>
</dbReference>
<dbReference type="HAMAP" id="MF_00273">
    <property type="entry name" value="Ribosomal_eL20"/>
    <property type="match status" value="1"/>
</dbReference>
<dbReference type="InterPro" id="IPR028877">
    <property type="entry name" value="Ribosomal_eL20"/>
</dbReference>
<dbReference type="InterPro" id="IPR023573">
    <property type="entry name" value="Ribosomal_eL20_dom"/>
</dbReference>
<dbReference type="NCBIfam" id="NF001981">
    <property type="entry name" value="PRK00773.1-1"/>
    <property type="match status" value="1"/>
</dbReference>
<dbReference type="Pfam" id="PF01775">
    <property type="entry name" value="Ribosomal_L18A"/>
    <property type="match status" value="1"/>
</dbReference>
<dbReference type="SUPFAM" id="SSF160374">
    <property type="entry name" value="RplX-like"/>
    <property type="match status" value="1"/>
</dbReference>
<sequence length="77" mass="9341">MNVKVFRVSGYFEKNGRKFKFTKEYRALKEEHVKELVYSDIGSKHKVKRRKIFIKEIKEIRPEEAEDIVVRRLSLEL</sequence>
<comment type="subunit">
    <text evidence="1">Part of the 50S ribosomal subunit. Binds 23S rRNA.</text>
</comment>
<comment type="similarity">
    <text evidence="1">Belongs to the eukaryotic ribosomal protein eL20 family.</text>
</comment>
<proteinExistence type="inferred from homology"/>
<gene>
    <name evidence="1" type="primary">rpl18a</name>
    <name evidence="1" type="synonym">rpl20e</name>
    <name evidence="1" type="synonym">rplX</name>
    <name evidence="1" type="synonym">rplXA</name>
    <name type="ordered locus">PYRAB15220</name>
    <name type="ORF">PAB7388</name>
</gene>
<reference key="1">
    <citation type="journal article" date="2003" name="Mol. Microbiol.">
        <title>An integrated analysis of the genome of the hyperthermophilic archaeon Pyrococcus abyssi.</title>
        <authorList>
            <person name="Cohen G.N."/>
            <person name="Barbe V."/>
            <person name="Flament D."/>
            <person name="Galperin M."/>
            <person name="Heilig R."/>
            <person name="Lecompte O."/>
            <person name="Poch O."/>
            <person name="Prieur D."/>
            <person name="Querellou J."/>
            <person name="Ripp R."/>
            <person name="Thierry J.-C."/>
            <person name="Van der Oost J."/>
            <person name="Weissenbach J."/>
            <person name="Zivanovic Y."/>
            <person name="Forterre P."/>
        </authorList>
    </citation>
    <scope>NUCLEOTIDE SEQUENCE [LARGE SCALE GENOMIC DNA]</scope>
    <source>
        <strain>GE5 / Orsay</strain>
    </source>
</reference>
<reference key="2">
    <citation type="journal article" date="2012" name="Curr. Microbiol.">
        <title>Re-annotation of two hyperthermophilic archaea Pyrococcus abyssi GE5 and Pyrococcus furiosus DSM 3638.</title>
        <authorList>
            <person name="Gao J."/>
            <person name="Wang J."/>
        </authorList>
    </citation>
    <scope>GENOME REANNOTATION</scope>
    <source>
        <strain>GE5 / Orsay</strain>
    </source>
</reference>
<feature type="chain" id="PRO_0000153704" description="Large ribosomal subunit protein eL20">
    <location>
        <begin position="1"/>
        <end position="77"/>
    </location>
</feature>